<sequence>MNIKIICVGKLKEKYFKQGIAEYAKRMSKFAKFQIVEVPDEKAPESLSNAEMENVKAKEGQRILEKIKDRDYVYALAILGKERSSEEFAAEIDKLTTYGHSDIDFVIGGSLGLSPEVLKRADTQISFGRFTLPHQLMRLVLSEQVYRAFMINVGSPYHK</sequence>
<name>RLMH_LACPL</name>
<gene>
    <name evidence="1" type="primary">rlmH</name>
    <name type="ordered locus">lp_0045</name>
</gene>
<reference key="1">
    <citation type="journal article" date="2003" name="Proc. Natl. Acad. Sci. U.S.A.">
        <title>Complete genome sequence of Lactobacillus plantarum WCFS1.</title>
        <authorList>
            <person name="Kleerebezem M."/>
            <person name="Boekhorst J."/>
            <person name="van Kranenburg R."/>
            <person name="Molenaar D."/>
            <person name="Kuipers O.P."/>
            <person name="Leer R."/>
            <person name="Tarchini R."/>
            <person name="Peters S.A."/>
            <person name="Sandbrink H.M."/>
            <person name="Fiers M.W.E.J."/>
            <person name="Stiekema W."/>
            <person name="Klein Lankhorst R.M."/>
            <person name="Bron P.A."/>
            <person name="Hoffer S.M."/>
            <person name="Nierop Groot M.N."/>
            <person name="Kerkhoven R."/>
            <person name="De Vries M."/>
            <person name="Ursing B."/>
            <person name="De Vos W.M."/>
            <person name="Siezen R.J."/>
        </authorList>
    </citation>
    <scope>NUCLEOTIDE SEQUENCE [LARGE SCALE GENOMIC DNA]</scope>
    <source>
        <strain>ATCC BAA-793 / NCIMB 8826 / WCFS1</strain>
    </source>
</reference>
<reference key="2">
    <citation type="journal article" date="2012" name="J. Bacteriol.">
        <title>Complete resequencing and reannotation of the Lactobacillus plantarum WCFS1 genome.</title>
        <authorList>
            <person name="Siezen R.J."/>
            <person name="Francke C."/>
            <person name="Renckens B."/>
            <person name="Boekhorst J."/>
            <person name="Wels M."/>
            <person name="Kleerebezem M."/>
            <person name="van Hijum S.A."/>
        </authorList>
    </citation>
    <scope>NUCLEOTIDE SEQUENCE [LARGE SCALE GENOMIC DNA]</scope>
    <scope>GENOME REANNOTATION</scope>
    <source>
        <strain>ATCC BAA-793 / NCIMB 8826 / WCFS1</strain>
    </source>
</reference>
<protein>
    <recommendedName>
        <fullName evidence="1">Ribosomal RNA large subunit methyltransferase H</fullName>
        <ecNumber evidence="1">2.1.1.177</ecNumber>
    </recommendedName>
    <alternativeName>
        <fullName evidence="1">23S rRNA (pseudouridine1915-N3)-methyltransferase</fullName>
    </alternativeName>
    <alternativeName>
        <fullName evidence="1">23S rRNA m3Psi1915 methyltransferase</fullName>
    </alternativeName>
    <alternativeName>
        <fullName evidence="1">rRNA (pseudouridine-N3-)-methyltransferase RlmH</fullName>
    </alternativeName>
</protein>
<keyword id="KW-0963">Cytoplasm</keyword>
<keyword id="KW-0489">Methyltransferase</keyword>
<keyword id="KW-1185">Reference proteome</keyword>
<keyword id="KW-0698">rRNA processing</keyword>
<keyword id="KW-0949">S-adenosyl-L-methionine</keyword>
<keyword id="KW-0808">Transferase</keyword>
<evidence type="ECO:0000255" key="1">
    <source>
        <dbReference type="HAMAP-Rule" id="MF_00658"/>
    </source>
</evidence>
<comment type="function">
    <text evidence="1">Specifically methylates the pseudouridine at position 1915 (m3Psi1915) in 23S rRNA.</text>
</comment>
<comment type="catalytic activity">
    <reaction evidence="1">
        <text>pseudouridine(1915) in 23S rRNA + S-adenosyl-L-methionine = N(3)-methylpseudouridine(1915) in 23S rRNA + S-adenosyl-L-homocysteine + H(+)</text>
        <dbReference type="Rhea" id="RHEA:42752"/>
        <dbReference type="Rhea" id="RHEA-COMP:10221"/>
        <dbReference type="Rhea" id="RHEA-COMP:10222"/>
        <dbReference type="ChEBI" id="CHEBI:15378"/>
        <dbReference type="ChEBI" id="CHEBI:57856"/>
        <dbReference type="ChEBI" id="CHEBI:59789"/>
        <dbReference type="ChEBI" id="CHEBI:65314"/>
        <dbReference type="ChEBI" id="CHEBI:74486"/>
        <dbReference type="EC" id="2.1.1.177"/>
    </reaction>
</comment>
<comment type="subunit">
    <text evidence="1">Homodimer.</text>
</comment>
<comment type="subcellular location">
    <subcellularLocation>
        <location evidence="1">Cytoplasm</location>
    </subcellularLocation>
</comment>
<comment type="similarity">
    <text evidence="1">Belongs to the RNA methyltransferase RlmH family.</text>
</comment>
<dbReference type="EC" id="2.1.1.177" evidence="1"/>
<dbReference type="EMBL" id="AL935263">
    <property type="protein sequence ID" value="CCC77614.1"/>
    <property type="molecule type" value="Genomic_DNA"/>
</dbReference>
<dbReference type="RefSeq" id="WP_003643636.1">
    <property type="nucleotide sequence ID" value="NC_004567.2"/>
</dbReference>
<dbReference type="RefSeq" id="YP_004888128.1">
    <property type="nucleotide sequence ID" value="NC_004567.2"/>
</dbReference>
<dbReference type="SMR" id="Q890H4"/>
<dbReference type="STRING" id="220668.lp_0045"/>
<dbReference type="EnsemblBacteria" id="CCC77614">
    <property type="protein sequence ID" value="CCC77614"/>
    <property type="gene ID" value="lp_0045"/>
</dbReference>
<dbReference type="KEGG" id="lpl:lp_0045"/>
<dbReference type="PATRIC" id="fig|220668.9.peg.36"/>
<dbReference type="eggNOG" id="COG1576">
    <property type="taxonomic scope" value="Bacteria"/>
</dbReference>
<dbReference type="HOGENOM" id="CLU_100552_0_0_9"/>
<dbReference type="OrthoDB" id="9806643at2"/>
<dbReference type="PhylomeDB" id="Q890H4"/>
<dbReference type="Proteomes" id="UP000000432">
    <property type="component" value="Chromosome"/>
</dbReference>
<dbReference type="GO" id="GO:0005737">
    <property type="term" value="C:cytoplasm"/>
    <property type="evidence" value="ECO:0007669"/>
    <property type="project" value="UniProtKB-SubCell"/>
</dbReference>
<dbReference type="GO" id="GO:0070038">
    <property type="term" value="F:rRNA (pseudouridine-N3-)-methyltransferase activity"/>
    <property type="evidence" value="ECO:0007669"/>
    <property type="project" value="UniProtKB-UniRule"/>
</dbReference>
<dbReference type="CDD" id="cd18081">
    <property type="entry name" value="RlmH-like"/>
    <property type="match status" value="1"/>
</dbReference>
<dbReference type="Gene3D" id="3.40.1280.10">
    <property type="match status" value="1"/>
</dbReference>
<dbReference type="HAMAP" id="MF_00658">
    <property type="entry name" value="23SrRNA_methyltr_H"/>
    <property type="match status" value="1"/>
</dbReference>
<dbReference type="InterPro" id="IPR029028">
    <property type="entry name" value="Alpha/beta_knot_MTases"/>
</dbReference>
<dbReference type="InterPro" id="IPR003742">
    <property type="entry name" value="RlmH-like"/>
</dbReference>
<dbReference type="InterPro" id="IPR029026">
    <property type="entry name" value="tRNA_m1G_MTases_N"/>
</dbReference>
<dbReference type="NCBIfam" id="NF000985">
    <property type="entry name" value="PRK00103.1-3"/>
    <property type="match status" value="1"/>
</dbReference>
<dbReference type="NCBIfam" id="TIGR00246">
    <property type="entry name" value="tRNA_RlmH_YbeA"/>
    <property type="match status" value="1"/>
</dbReference>
<dbReference type="PANTHER" id="PTHR33603">
    <property type="entry name" value="METHYLTRANSFERASE"/>
    <property type="match status" value="1"/>
</dbReference>
<dbReference type="PANTHER" id="PTHR33603:SF1">
    <property type="entry name" value="RIBOSOMAL RNA LARGE SUBUNIT METHYLTRANSFERASE H"/>
    <property type="match status" value="1"/>
</dbReference>
<dbReference type="Pfam" id="PF02590">
    <property type="entry name" value="SPOUT_MTase"/>
    <property type="match status" value="1"/>
</dbReference>
<dbReference type="PIRSF" id="PIRSF004505">
    <property type="entry name" value="MT_bac"/>
    <property type="match status" value="1"/>
</dbReference>
<dbReference type="SUPFAM" id="SSF75217">
    <property type="entry name" value="alpha/beta knot"/>
    <property type="match status" value="1"/>
</dbReference>
<feature type="chain" id="PRO_0000198134" description="Ribosomal RNA large subunit methyltransferase H">
    <location>
        <begin position="1"/>
        <end position="159"/>
    </location>
</feature>
<feature type="binding site" evidence="1">
    <location>
        <position position="76"/>
    </location>
    <ligand>
        <name>S-adenosyl-L-methionine</name>
        <dbReference type="ChEBI" id="CHEBI:59789"/>
    </ligand>
</feature>
<feature type="binding site" evidence="1">
    <location>
        <position position="108"/>
    </location>
    <ligand>
        <name>S-adenosyl-L-methionine</name>
        <dbReference type="ChEBI" id="CHEBI:59789"/>
    </ligand>
</feature>
<organism>
    <name type="scientific">Lactiplantibacillus plantarum (strain ATCC BAA-793 / NCIMB 8826 / WCFS1)</name>
    <name type="common">Lactobacillus plantarum</name>
    <dbReference type="NCBI Taxonomy" id="220668"/>
    <lineage>
        <taxon>Bacteria</taxon>
        <taxon>Bacillati</taxon>
        <taxon>Bacillota</taxon>
        <taxon>Bacilli</taxon>
        <taxon>Lactobacillales</taxon>
        <taxon>Lactobacillaceae</taxon>
        <taxon>Lactiplantibacillus</taxon>
    </lineage>
</organism>
<proteinExistence type="inferred from homology"/>
<accession>Q890H4</accession>
<accession>F9US67</accession>